<keyword id="KW-0687">Ribonucleoprotein</keyword>
<keyword id="KW-0689">Ribosomal protein</keyword>
<keyword id="KW-0694">RNA-binding</keyword>
<keyword id="KW-0699">rRNA-binding</keyword>
<sequence length="77" mass="8331">MANIKSAIKRAELNVKQNEKNSAQKSAMRTAIKAFEANPSEELYRAASSSIDKAASKGLIHTNKASRDKARLATKLG</sequence>
<protein>
    <recommendedName>
        <fullName evidence="1">Small ribosomal subunit protein bS20</fullName>
    </recommendedName>
    <alternativeName>
        <fullName evidence="2">30S ribosomal protein S20</fullName>
    </alternativeName>
</protein>
<organism>
    <name type="scientific">Streptococcus agalactiae serotype III (strain NEM316)</name>
    <dbReference type="NCBI Taxonomy" id="211110"/>
    <lineage>
        <taxon>Bacteria</taxon>
        <taxon>Bacillati</taxon>
        <taxon>Bacillota</taxon>
        <taxon>Bacilli</taxon>
        <taxon>Lactobacillales</taxon>
        <taxon>Streptococcaceae</taxon>
        <taxon>Streptococcus</taxon>
    </lineage>
</organism>
<comment type="function">
    <text evidence="1">Binds directly to 16S ribosomal RNA.</text>
</comment>
<comment type="similarity">
    <text evidence="1">Belongs to the bacterial ribosomal protein bS20 family.</text>
</comment>
<reference key="1">
    <citation type="journal article" date="2002" name="Mol. Microbiol.">
        <title>Genome sequence of Streptococcus agalactiae, a pathogen causing invasive neonatal disease.</title>
        <authorList>
            <person name="Glaser P."/>
            <person name="Rusniok C."/>
            <person name="Buchrieser C."/>
            <person name="Chevalier F."/>
            <person name="Frangeul L."/>
            <person name="Msadek T."/>
            <person name="Zouine M."/>
            <person name="Couve E."/>
            <person name="Lalioui L."/>
            <person name="Poyart C."/>
            <person name="Trieu-Cuot P."/>
            <person name="Kunst F."/>
        </authorList>
    </citation>
    <scope>NUCLEOTIDE SEQUENCE [LARGE SCALE GENOMIC DNA]</scope>
    <source>
        <strain>NEM316</strain>
    </source>
</reference>
<feature type="chain" id="PRO_0000168031" description="Small ribosomal subunit protein bS20">
    <location>
        <begin position="1"/>
        <end position="77"/>
    </location>
</feature>
<dbReference type="EMBL" id="AL766848">
    <property type="protein sequence ID" value="CAD46597.1"/>
    <property type="molecule type" value="Genomic_DNA"/>
</dbReference>
<dbReference type="SMR" id="Q8E5P3"/>
<dbReference type="KEGG" id="san:rpsT"/>
<dbReference type="eggNOG" id="COG0268">
    <property type="taxonomic scope" value="Bacteria"/>
</dbReference>
<dbReference type="HOGENOM" id="CLU_160655_1_1_9"/>
<dbReference type="Proteomes" id="UP000000823">
    <property type="component" value="Chromosome"/>
</dbReference>
<dbReference type="GO" id="GO:0005829">
    <property type="term" value="C:cytosol"/>
    <property type="evidence" value="ECO:0007669"/>
    <property type="project" value="TreeGrafter"/>
</dbReference>
<dbReference type="GO" id="GO:0015935">
    <property type="term" value="C:small ribosomal subunit"/>
    <property type="evidence" value="ECO:0007669"/>
    <property type="project" value="TreeGrafter"/>
</dbReference>
<dbReference type="GO" id="GO:0070181">
    <property type="term" value="F:small ribosomal subunit rRNA binding"/>
    <property type="evidence" value="ECO:0007669"/>
    <property type="project" value="TreeGrafter"/>
</dbReference>
<dbReference type="GO" id="GO:0003735">
    <property type="term" value="F:structural constituent of ribosome"/>
    <property type="evidence" value="ECO:0007669"/>
    <property type="project" value="InterPro"/>
</dbReference>
<dbReference type="GO" id="GO:0006412">
    <property type="term" value="P:translation"/>
    <property type="evidence" value="ECO:0007669"/>
    <property type="project" value="UniProtKB-UniRule"/>
</dbReference>
<dbReference type="FunFam" id="1.20.58.110:FF:000001">
    <property type="entry name" value="30S ribosomal protein S20"/>
    <property type="match status" value="1"/>
</dbReference>
<dbReference type="Gene3D" id="1.20.58.110">
    <property type="entry name" value="Ribosomal protein S20"/>
    <property type="match status" value="1"/>
</dbReference>
<dbReference type="HAMAP" id="MF_00500">
    <property type="entry name" value="Ribosomal_bS20"/>
    <property type="match status" value="1"/>
</dbReference>
<dbReference type="InterPro" id="IPR002583">
    <property type="entry name" value="Ribosomal_bS20"/>
</dbReference>
<dbReference type="InterPro" id="IPR036510">
    <property type="entry name" value="Ribosomal_bS20_sf"/>
</dbReference>
<dbReference type="NCBIfam" id="TIGR00029">
    <property type="entry name" value="S20"/>
    <property type="match status" value="1"/>
</dbReference>
<dbReference type="PANTHER" id="PTHR33398">
    <property type="entry name" value="30S RIBOSOMAL PROTEIN S20"/>
    <property type="match status" value="1"/>
</dbReference>
<dbReference type="PANTHER" id="PTHR33398:SF1">
    <property type="entry name" value="SMALL RIBOSOMAL SUBUNIT PROTEIN BS20C"/>
    <property type="match status" value="1"/>
</dbReference>
<dbReference type="Pfam" id="PF01649">
    <property type="entry name" value="Ribosomal_S20p"/>
    <property type="match status" value="1"/>
</dbReference>
<dbReference type="SUPFAM" id="SSF46992">
    <property type="entry name" value="Ribosomal protein S20"/>
    <property type="match status" value="1"/>
</dbReference>
<evidence type="ECO:0000255" key="1">
    <source>
        <dbReference type="HAMAP-Rule" id="MF_00500"/>
    </source>
</evidence>
<evidence type="ECO:0000305" key="2"/>
<name>RS20_STRA3</name>
<accession>Q8E5P3</accession>
<gene>
    <name evidence="1" type="primary">rpsT</name>
    <name type="ordered locus">gbs0938</name>
</gene>
<proteinExistence type="inferred from homology"/>